<reference key="1">
    <citation type="journal article" date="2003" name="Nat. Biotechnol.">
        <title>Complete genome sequence and comparative analysis of the industrial microorganism Streptomyces avermitilis.</title>
        <authorList>
            <person name="Ikeda H."/>
            <person name="Ishikawa J."/>
            <person name="Hanamoto A."/>
            <person name="Shinose M."/>
            <person name="Kikuchi H."/>
            <person name="Shiba T."/>
            <person name="Sakaki Y."/>
            <person name="Hattori M."/>
            <person name="Omura S."/>
        </authorList>
    </citation>
    <scope>NUCLEOTIDE SEQUENCE [LARGE SCALE GENOMIC DNA]</scope>
    <source>
        <strain>ATCC 31267 / DSM 46492 / JCM 5070 / NBRC 14893 / NCIMB 12804 / NRRL 8165 / MA-4680</strain>
    </source>
</reference>
<reference key="2">
    <citation type="journal article" date="2001" name="Proc. Natl. Acad. Sci. U.S.A.">
        <title>Genome sequence of an industrial microorganism Streptomyces avermitilis: deducing the ability of producing secondary metabolites.</title>
        <authorList>
            <person name="Omura S."/>
            <person name="Ikeda H."/>
            <person name="Ishikawa J."/>
            <person name="Hanamoto A."/>
            <person name="Takahashi C."/>
            <person name="Shinose M."/>
            <person name="Takahashi Y."/>
            <person name="Horikawa H."/>
            <person name="Nakazawa H."/>
            <person name="Osonoe T."/>
            <person name="Kikuchi H."/>
            <person name="Shiba T."/>
            <person name="Sakaki Y."/>
            <person name="Hattori M."/>
        </authorList>
    </citation>
    <scope>NUCLEOTIDE SEQUENCE [LARGE SCALE GENOMIC DNA]</scope>
    <source>
        <strain>ATCC 31267 / DSM 46492 / JCM 5070 / NBRC 14893 / NCIMB 12804 / NRRL 8165 / MA-4680</strain>
    </source>
</reference>
<keyword id="KW-0456">Lyase</keyword>
<keyword id="KW-0501">Molybdenum cofactor biosynthesis</keyword>
<keyword id="KW-1185">Reference proteome</keyword>
<evidence type="ECO:0000255" key="1">
    <source>
        <dbReference type="HAMAP-Rule" id="MF_01224"/>
    </source>
</evidence>
<feature type="chain" id="PRO_1000054153" description="Cyclic pyranopterin monophosphate synthase">
    <location>
        <begin position="1"/>
        <end position="170"/>
    </location>
</feature>
<feature type="active site" evidence="1">
    <location>
        <position position="140"/>
    </location>
</feature>
<feature type="binding site" evidence="1">
    <location>
        <begin position="89"/>
        <end position="91"/>
    </location>
    <ligand>
        <name>substrate</name>
    </ligand>
</feature>
<feature type="binding site" evidence="1">
    <location>
        <begin position="125"/>
        <end position="126"/>
    </location>
    <ligand>
        <name>substrate</name>
    </ligand>
</feature>
<organism>
    <name type="scientific">Streptomyces avermitilis (strain ATCC 31267 / DSM 46492 / JCM 5070 / NBRC 14893 / NCIMB 12804 / NRRL 8165 / MA-4680)</name>
    <dbReference type="NCBI Taxonomy" id="227882"/>
    <lineage>
        <taxon>Bacteria</taxon>
        <taxon>Bacillati</taxon>
        <taxon>Actinomycetota</taxon>
        <taxon>Actinomycetes</taxon>
        <taxon>Kitasatosporales</taxon>
        <taxon>Streptomycetaceae</taxon>
        <taxon>Streptomyces</taxon>
    </lineage>
</organism>
<protein>
    <recommendedName>
        <fullName evidence="1">Cyclic pyranopterin monophosphate synthase</fullName>
        <ecNumber evidence="1">4.6.1.17</ecNumber>
    </recommendedName>
    <alternativeName>
        <fullName evidence="1">Molybdenum cofactor biosynthesis protein C</fullName>
    </alternativeName>
</protein>
<accession>Q82H75</accession>
<name>MOAC_STRAW</name>
<gene>
    <name evidence="1" type="primary">moaC</name>
    <name type="ordered locus">SAV_3671</name>
</gene>
<sequence>MTVPSRGETPGPPAQDRLTHIDEAGAARMVDVSGKDVTARTARASGRVLVSPRVVELLRGEGVPKGDALATARIAGIMGAKRTPDLIPLCHPLSVSGVKLDLSVADDAVEILATVKTTDRTGVEMEALTAVSVAALTVIDMVKAVDKGAVITDVRVEEKTGGKSGDWSRS</sequence>
<comment type="function">
    <text evidence="1">Catalyzes the conversion of (8S)-3',8-cyclo-7,8-dihydroguanosine 5'-triphosphate to cyclic pyranopterin monophosphate (cPMP).</text>
</comment>
<comment type="catalytic activity">
    <reaction evidence="1">
        <text>(8S)-3',8-cyclo-7,8-dihydroguanosine 5'-triphosphate = cyclic pyranopterin phosphate + diphosphate</text>
        <dbReference type="Rhea" id="RHEA:49580"/>
        <dbReference type="ChEBI" id="CHEBI:33019"/>
        <dbReference type="ChEBI" id="CHEBI:59648"/>
        <dbReference type="ChEBI" id="CHEBI:131766"/>
        <dbReference type="EC" id="4.6.1.17"/>
    </reaction>
</comment>
<comment type="pathway">
    <text evidence="1">Cofactor biosynthesis; molybdopterin biosynthesis.</text>
</comment>
<comment type="subunit">
    <text evidence="1">Homohexamer; trimer of dimers.</text>
</comment>
<comment type="similarity">
    <text evidence="1">Belongs to the MoaC family.</text>
</comment>
<dbReference type="EC" id="4.6.1.17" evidence="1"/>
<dbReference type="EMBL" id="BA000030">
    <property type="protein sequence ID" value="BAC71383.1"/>
    <property type="molecule type" value="Genomic_DNA"/>
</dbReference>
<dbReference type="RefSeq" id="WP_010985102.1">
    <property type="nucleotide sequence ID" value="NZ_JZJK01000090.1"/>
</dbReference>
<dbReference type="SMR" id="Q82H75"/>
<dbReference type="GeneID" id="41540736"/>
<dbReference type="KEGG" id="sma:SAVERM_3671"/>
<dbReference type="eggNOG" id="COG0315">
    <property type="taxonomic scope" value="Bacteria"/>
</dbReference>
<dbReference type="HOGENOM" id="CLU_074693_1_1_11"/>
<dbReference type="OrthoDB" id="9794429at2"/>
<dbReference type="UniPathway" id="UPA00344"/>
<dbReference type="Proteomes" id="UP000000428">
    <property type="component" value="Chromosome"/>
</dbReference>
<dbReference type="GO" id="GO:0061799">
    <property type="term" value="F:cyclic pyranopterin monophosphate synthase activity"/>
    <property type="evidence" value="ECO:0007669"/>
    <property type="project" value="UniProtKB-UniRule"/>
</dbReference>
<dbReference type="GO" id="GO:0006777">
    <property type="term" value="P:Mo-molybdopterin cofactor biosynthetic process"/>
    <property type="evidence" value="ECO:0007669"/>
    <property type="project" value="UniProtKB-UniRule"/>
</dbReference>
<dbReference type="CDD" id="cd01420">
    <property type="entry name" value="MoaC_PE"/>
    <property type="match status" value="1"/>
</dbReference>
<dbReference type="Gene3D" id="3.30.70.640">
    <property type="entry name" value="Molybdopterin cofactor biosynthesis C (MoaC) domain"/>
    <property type="match status" value="1"/>
</dbReference>
<dbReference type="HAMAP" id="MF_01224_B">
    <property type="entry name" value="MoaC_B"/>
    <property type="match status" value="1"/>
</dbReference>
<dbReference type="InterPro" id="IPR023045">
    <property type="entry name" value="MoaC"/>
</dbReference>
<dbReference type="InterPro" id="IPR047594">
    <property type="entry name" value="MoaC_bact/euk"/>
</dbReference>
<dbReference type="InterPro" id="IPR036522">
    <property type="entry name" value="MoaC_sf"/>
</dbReference>
<dbReference type="InterPro" id="IPR050105">
    <property type="entry name" value="MoCo_biosynth_MoaA/MoaC"/>
</dbReference>
<dbReference type="InterPro" id="IPR002820">
    <property type="entry name" value="Mopterin_CF_biosynth-C_dom"/>
</dbReference>
<dbReference type="NCBIfam" id="TIGR00581">
    <property type="entry name" value="moaC"/>
    <property type="match status" value="1"/>
</dbReference>
<dbReference type="NCBIfam" id="NF006870">
    <property type="entry name" value="PRK09364.1"/>
    <property type="match status" value="1"/>
</dbReference>
<dbReference type="PANTHER" id="PTHR22960:SF29">
    <property type="entry name" value="CYCLIC PYRANOPTERIN MONOPHOSPHATE SYNTHASE"/>
    <property type="match status" value="1"/>
</dbReference>
<dbReference type="PANTHER" id="PTHR22960">
    <property type="entry name" value="MOLYBDOPTERIN COFACTOR SYNTHESIS PROTEIN A"/>
    <property type="match status" value="1"/>
</dbReference>
<dbReference type="Pfam" id="PF01967">
    <property type="entry name" value="MoaC"/>
    <property type="match status" value="1"/>
</dbReference>
<dbReference type="SUPFAM" id="SSF55040">
    <property type="entry name" value="Molybdenum cofactor biosynthesis protein C, MoaC"/>
    <property type="match status" value="1"/>
</dbReference>
<proteinExistence type="inferred from homology"/>